<name>EFTS_VIBA3</name>
<dbReference type="EMBL" id="FM954972">
    <property type="protein sequence ID" value="CAV19513.1"/>
    <property type="molecule type" value="Genomic_DNA"/>
</dbReference>
<dbReference type="SMR" id="B7VIR7"/>
<dbReference type="STRING" id="575788.VS_2352"/>
<dbReference type="KEGG" id="vsp:VS_2352"/>
<dbReference type="eggNOG" id="COG0264">
    <property type="taxonomic scope" value="Bacteria"/>
</dbReference>
<dbReference type="HOGENOM" id="CLU_047155_0_2_6"/>
<dbReference type="Proteomes" id="UP000009100">
    <property type="component" value="Chromosome 1"/>
</dbReference>
<dbReference type="GO" id="GO:0005737">
    <property type="term" value="C:cytoplasm"/>
    <property type="evidence" value="ECO:0007669"/>
    <property type="project" value="UniProtKB-SubCell"/>
</dbReference>
<dbReference type="GO" id="GO:0003746">
    <property type="term" value="F:translation elongation factor activity"/>
    <property type="evidence" value="ECO:0007669"/>
    <property type="project" value="UniProtKB-UniRule"/>
</dbReference>
<dbReference type="CDD" id="cd14275">
    <property type="entry name" value="UBA_EF-Ts"/>
    <property type="match status" value="1"/>
</dbReference>
<dbReference type="FunFam" id="1.10.286.20:FF:000001">
    <property type="entry name" value="Elongation factor Ts"/>
    <property type="match status" value="1"/>
</dbReference>
<dbReference type="FunFam" id="1.10.8.10:FF:000001">
    <property type="entry name" value="Elongation factor Ts"/>
    <property type="match status" value="1"/>
</dbReference>
<dbReference type="FunFam" id="3.30.479.20:FF:000001">
    <property type="entry name" value="Elongation factor Ts"/>
    <property type="match status" value="1"/>
</dbReference>
<dbReference type="Gene3D" id="1.10.286.20">
    <property type="match status" value="1"/>
</dbReference>
<dbReference type="Gene3D" id="1.10.8.10">
    <property type="entry name" value="DNA helicase RuvA subunit, C-terminal domain"/>
    <property type="match status" value="1"/>
</dbReference>
<dbReference type="Gene3D" id="3.30.479.20">
    <property type="entry name" value="Elongation factor Ts, dimerisation domain"/>
    <property type="match status" value="2"/>
</dbReference>
<dbReference type="HAMAP" id="MF_00050">
    <property type="entry name" value="EF_Ts"/>
    <property type="match status" value="1"/>
</dbReference>
<dbReference type="InterPro" id="IPR036402">
    <property type="entry name" value="EF-Ts_dimer_sf"/>
</dbReference>
<dbReference type="InterPro" id="IPR001816">
    <property type="entry name" value="Transl_elong_EFTs/EF1B"/>
</dbReference>
<dbReference type="InterPro" id="IPR014039">
    <property type="entry name" value="Transl_elong_EFTs/EF1B_dimer"/>
</dbReference>
<dbReference type="InterPro" id="IPR018101">
    <property type="entry name" value="Transl_elong_Ts_CS"/>
</dbReference>
<dbReference type="InterPro" id="IPR009060">
    <property type="entry name" value="UBA-like_sf"/>
</dbReference>
<dbReference type="NCBIfam" id="TIGR00116">
    <property type="entry name" value="tsf"/>
    <property type="match status" value="1"/>
</dbReference>
<dbReference type="PANTHER" id="PTHR11741">
    <property type="entry name" value="ELONGATION FACTOR TS"/>
    <property type="match status" value="1"/>
</dbReference>
<dbReference type="PANTHER" id="PTHR11741:SF0">
    <property type="entry name" value="ELONGATION FACTOR TS, MITOCHONDRIAL"/>
    <property type="match status" value="1"/>
</dbReference>
<dbReference type="Pfam" id="PF00889">
    <property type="entry name" value="EF_TS"/>
    <property type="match status" value="1"/>
</dbReference>
<dbReference type="SUPFAM" id="SSF54713">
    <property type="entry name" value="Elongation factor Ts (EF-Ts), dimerisation domain"/>
    <property type="match status" value="2"/>
</dbReference>
<dbReference type="SUPFAM" id="SSF46934">
    <property type="entry name" value="UBA-like"/>
    <property type="match status" value="1"/>
</dbReference>
<dbReference type="PROSITE" id="PS01127">
    <property type="entry name" value="EF_TS_2"/>
    <property type="match status" value="1"/>
</dbReference>
<keyword id="KW-0963">Cytoplasm</keyword>
<keyword id="KW-0251">Elongation factor</keyword>
<keyword id="KW-0648">Protein biosynthesis</keyword>
<protein>
    <recommendedName>
        <fullName evidence="1">Elongation factor Ts</fullName>
        <shortName evidence="1">EF-Ts</shortName>
    </recommendedName>
</protein>
<reference key="1">
    <citation type="submission" date="2009-02" db="EMBL/GenBank/DDBJ databases">
        <title>Vibrio splendidus str. LGP32 complete genome.</title>
        <authorList>
            <person name="Mazel D."/>
            <person name="Le Roux F."/>
        </authorList>
    </citation>
    <scope>NUCLEOTIDE SEQUENCE [LARGE SCALE GENOMIC DNA]</scope>
    <source>
        <strain>LGP32</strain>
    </source>
</reference>
<sequence length="281" mass="29776">MATVTAALVKELRERTAAGMMECKKALVAAEGDIELAIENMRKSGAAKAAKKAGNVAAEGAIIIKEEAGVAALLEVNCQTDFVAKDAGFLAFANEVAEVALAERLDIVALQAKFEDARIALVTKIGENISIRRVELVEGVALASYRHGEKIGVVVAGEGEAETLKHIAMHVAASKPEYVNPSDVPADVVEKEKAVQVEIAMNEGKPQEIAEKMVIGRMKKFTGEVSLTGQAFIMEPKKTVADILKEKGASVTTFVRLEVGEGIEKAAEMSFADEVAAVQKG</sequence>
<evidence type="ECO:0000255" key="1">
    <source>
        <dbReference type="HAMAP-Rule" id="MF_00050"/>
    </source>
</evidence>
<proteinExistence type="inferred from homology"/>
<accession>B7VIR7</accession>
<feature type="chain" id="PRO_1000189902" description="Elongation factor Ts">
    <location>
        <begin position="1"/>
        <end position="281"/>
    </location>
</feature>
<feature type="region of interest" description="Involved in Mg(2+) ion dislocation from EF-Tu" evidence="1">
    <location>
        <begin position="80"/>
        <end position="83"/>
    </location>
</feature>
<organism>
    <name type="scientific">Vibrio atlanticus (strain LGP32)</name>
    <name type="common">Vibrio splendidus (strain Mel32)</name>
    <dbReference type="NCBI Taxonomy" id="575788"/>
    <lineage>
        <taxon>Bacteria</taxon>
        <taxon>Pseudomonadati</taxon>
        <taxon>Pseudomonadota</taxon>
        <taxon>Gammaproteobacteria</taxon>
        <taxon>Vibrionales</taxon>
        <taxon>Vibrionaceae</taxon>
        <taxon>Vibrio</taxon>
    </lineage>
</organism>
<gene>
    <name evidence="1" type="primary">tsf</name>
    <name type="ordered locus">VS_2352</name>
</gene>
<comment type="function">
    <text evidence="1">Associates with the EF-Tu.GDP complex and induces the exchange of GDP to GTP. It remains bound to the aminoacyl-tRNA.EF-Tu.GTP complex up to the GTP hydrolysis stage on the ribosome.</text>
</comment>
<comment type="subcellular location">
    <subcellularLocation>
        <location evidence="1">Cytoplasm</location>
    </subcellularLocation>
</comment>
<comment type="similarity">
    <text evidence="1">Belongs to the EF-Ts family.</text>
</comment>